<protein>
    <recommendedName>
        <fullName evidence="1">Orotidine 5'-phosphate decarboxylase</fullName>
        <ecNumber evidence="1">4.1.1.23</ecNumber>
    </recommendedName>
    <alternativeName>
        <fullName evidence="1">OMP decarboxylase</fullName>
        <shortName evidence="1">OMPDCase</shortName>
        <shortName evidence="1">OMPdecase</shortName>
    </alternativeName>
</protein>
<accession>Q1CJ05</accession>
<accession>C4GSZ1</accession>
<feature type="chain" id="PRO_1000065963" description="Orotidine 5'-phosphate decarboxylase">
    <location>
        <begin position="1"/>
        <end position="245"/>
    </location>
</feature>
<feature type="active site" description="Proton donor" evidence="1">
    <location>
        <position position="73"/>
    </location>
</feature>
<feature type="binding site" evidence="1">
    <location>
        <position position="22"/>
    </location>
    <ligand>
        <name>substrate</name>
    </ligand>
</feature>
<feature type="binding site" evidence="1">
    <location>
        <position position="44"/>
    </location>
    <ligand>
        <name>substrate</name>
    </ligand>
</feature>
<feature type="binding site" evidence="1">
    <location>
        <begin position="71"/>
        <end position="80"/>
    </location>
    <ligand>
        <name>substrate</name>
    </ligand>
</feature>
<feature type="binding site" evidence="1">
    <location>
        <position position="131"/>
    </location>
    <ligand>
        <name>substrate</name>
    </ligand>
</feature>
<feature type="binding site" evidence="1">
    <location>
        <position position="192"/>
    </location>
    <ligand>
        <name>substrate</name>
    </ligand>
</feature>
<feature type="binding site" evidence="1">
    <location>
        <position position="201"/>
    </location>
    <ligand>
        <name>substrate</name>
    </ligand>
</feature>
<feature type="binding site" evidence="1">
    <location>
        <position position="221"/>
    </location>
    <ligand>
        <name>substrate</name>
    </ligand>
</feature>
<feature type="binding site" evidence="1">
    <location>
        <position position="222"/>
    </location>
    <ligand>
        <name>substrate</name>
    </ligand>
</feature>
<reference key="1">
    <citation type="journal article" date="2006" name="J. Bacteriol.">
        <title>Complete genome sequence of Yersinia pestis strains Antiqua and Nepal516: evidence of gene reduction in an emerging pathogen.</title>
        <authorList>
            <person name="Chain P.S.G."/>
            <person name="Hu P."/>
            <person name="Malfatti S.A."/>
            <person name="Radnedge L."/>
            <person name="Larimer F."/>
            <person name="Vergez L.M."/>
            <person name="Worsham P."/>
            <person name="Chu M.C."/>
            <person name="Andersen G.L."/>
        </authorList>
    </citation>
    <scope>NUCLEOTIDE SEQUENCE [LARGE SCALE GENOMIC DNA]</scope>
    <source>
        <strain>Nepal516</strain>
    </source>
</reference>
<reference key="2">
    <citation type="submission" date="2009-04" db="EMBL/GenBank/DDBJ databases">
        <title>Yersinia pestis Nepal516A whole genome shotgun sequencing project.</title>
        <authorList>
            <person name="Plunkett G. III"/>
            <person name="Anderson B.D."/>
            <person name="Baumler D.J."/>
            <person name="Burland V."/>
            <person name="Cabot E.L."/>
            <person name="Glasner J.D."/>
            <person name="Mau B."/>
            <person name="Neeno-Eckwall E."/>
            <person name="Perna N.T."/>
            <person name="Munk A.C."/>
            <person name="Tapia R."/>
            <person name="Green L.D."/>
            <person name="Rogers Y.C."/>
            <person name="Detter J.C."/>
            <person name="Bruce D.C."/>
            <person name="Brettin T.S."/>
        </authorList>
    </citation>
    <scope>NUCLEOTIDE SEQUENCE [LARGE SCALE GENOMIC DNA]</scope>
    <source>
        <strain>Nepal516</strain>
    </source>
</reference>
<sequence>MTSATKTNNSGSISSPIVVALDYANKDAALAFADQVSPQDCRLKVGKEMFTLYGPELIRDLHQRGFDVFLDLKFHDIPNTTARAVAAAAELGVWMVNVHASGGARMMSAAKEALLPYGAQAPLLIAVTVLTSMDGEDLRDIGITISPAEQAERLAKLTWDCGLDGVVCSAHEAVRLKQVCGEDFSLVTPGIRPQGSEAGDQRRIMTPEQAVAVGVDYMVIGRPITQSPDPEKTLREILASLTKVA</sequence>
<keyword id="KW-0210">Decarboxylase</keyword>
<keyword id="KW-0456">Lyase</keyword>
<keyword id="KW-0665">Pyrimidine biosynthesis</keyword>
<organism>
    <name type="scientific">Yersinia pestis bv. Antiqua (strain Nepal516)</name>
    <dbReference type="NCBI Taxonomy" id="377628"/>
    <lineage>
        <taxon>Bacteria</taxon>
        <taxon>Pseudomonadati</taxon>
        <taxon>Pseudomonadota</taxon>
        <taxon>Gammaproteobacteria</taxon>
        <taxon>Enterobacterales</taxon>
        <taxon>Yersiniaceae</taxon>
        <taxon>Yersinia</taxon>
    </lineage>
</organism>
<evidence type="ECO:0000255" key="1">
    <source>
        <dbReference type="HAMAP-Rule" id="MF_01200"/>
    </source>
</evidence>
<proteinExistence type="inferred from homology"/>
<comment type="function">
    <text evidence="1">Catalyzes the decarboxylation of orotidine 5'-monophosphate (OMP) to uridine 5'-monophosphate (UMP).</text>
</comment>
<comment type="catalytic activity">
    <reaction evidence="1">
        <text>orotidine 5'-phosphate + H(+) = UMP + CO2</text>
        <dbReference type="Rhea" id="RHEA:11596"/>
        <dbReference type="ChEBI" id="CHEBI:15378"/>
        <dbReference type="ChEBI" id="CHEBI:16526"/>
        <dbReference type="ChEBI" id="CHEBI:57538"/>
        <dbReference type="ChEBI" id="CHEBI:57865"/>
        <dbReference type="EC" id="4.1.1.23"/>
    </reaction>
</comment>
<comment type="pathway">
    <text evidence="1">Pyrimidine metabolism; UMP biosynthesis via de novo pathway; UMP from orotate: step 2/2.</text>
</comment>
<comment type="subunit">
    <text evidence="1">Homodimer.</text>
</comment>
<comment type="similarity">
    <text evidence="1">Belongs to the OMP decarboxylase family. Type 1 subfamily.</text>
</comment>
<name>PYRF_YERPN</name>
<gene>
    <name evidence="1" type="primary">pyrF</name>
    <name type="ordered locus">YPN_1696</name>
    <name type="ORF">YP516_1886</name>
</gene>
<dbReference type="EC" id="4.1.1.23" evidence="1"/>
<dbReference type="EMBL" id="CP000305">
    <property type="protein sequence ID" value="ABG18025.1"/>
    <property type="molecule type" value="Genomic_DNA"/>
</dbReference>
<dbReference type="EMBL" id="ACNQ01000009">
    <property type="protein sequence ID" value="EEO77151.1"/>
    <property type="molecule type" value="Genomic_DNA"/>
</dbReference>
<dbReference type="RefSeq" id="WP_002210613.1">
    <property type="nucleotide sequence ID" value="NZ_ACNQ01000009.1"/>
</dbReference>
<dbReference type="SMR" id="Q1CJ05"/>
<dbReference type="GeneID" id="57976441"/>
<dbReference type="KEGG" id="ypn:YPN_1696"/>
<dbReference type="HOGENOM" id="CLU_067069_0_0_6"/>
<dbReference type="UniPathway" id="UPA00070">
    <property type="reaction ID" value="UER00120"/>
</dbReference>
<dbReference type="Proteomes" id="UP000008936">
    <property type="component" value="Chromosome"/>
</dbReference>
<dbReference type="GO" id="GO:0005829">
    <property type="term" value="C:cytosol"/>
    <property type="evidence" value="ECO:0007669"/>
    <property type="project" value="TreeGrafter"/>
</dbReference>
<dbReference type="GO" id="GO:0004590">
    <property type="term" value="F:orotidine-5'-phosphate decarboxylase activity"/>
    <property type="evidence" value="ECO:0007669"/>
    <property type="project" value="UniProtKB-UniRule"/>
</dbReference>
<dbReference type="GO" id="GO:0006207">
    <property type="term" value="P:'de novo' pyrimidine nucleobase biosynthetic process"/>
    <property type="evidence" value="ECO:0007669"/>
    <property type="project" value="InterPro"/>
</dbReference>
<dbReference type="GO" id="GO:0044205">
    <property type="term" value="P:'de novo' UMP biosynthetic process"/>
    <property type="evidence" value="ECO:0007669"/>
    <property type="project" value="UniProtKB-UniRule"/>
</dbReference>
<dbReference type="CDD" id="cd04725">
    <property type="entry name" value="OMP_decarboxylase_like"/>
    <property type="match status" value="1"/>
</dbReference>
<dbReference type="FunFam" id="3.20.20.70:FF:000015">
    <property type="entry name" value="Orotidine 5'-phosphate decarboxylase"/>
    <property type="match status" value="1"/>
</dbReference>
<dbReference type="Gene3D" id="3.20.20.70">
    <property type="entry name" value="Aldolase class I"/>
    <property type="match status" value="1"/>
</dbReference>
<dbReference type="HAMAP" id="MF_01200_B">
    <property type="entry name" value="OMPdecase_type1_B"/>
    <property type="match status" value="1"/>
</dbReference>
<dbReference type="InterPro" id="IPR013785">
    <property type="entry name" value="Aldolase_TIM"/>
</dbReference>
<dbReference type="InterPro" id="IPR014732">
    <property type="entry name" value="OMPdecase"/>
</dbReference>
<dbReference type="InterPro" id="IPR018089">
    <property type="entry name" value="OMPdecase_AS"/>
</dbReference>
<dbReference type="InterPro" id="IPR047596">
    <property type="entry name" value="OMPdecase_bac"/>
</dbReference>
<dbReference type="InterPro" id="IPR001754">
    <property type="entry name" value="OMPdeCOase_dom"/>
</dbReference>
<dbReference type="InterPro" id="IPR011060">
    <property type="entry name" value="RibuloseP-bd_barrel"/>
</dbReference>
<dbReference type="NCBIfam" id="NF001273">
    <property type="entry name" value="PRK00230.1"/>
    <property type="match status" value="1"/>
</dbReference>
<dbReference type="NCBIfam" id="TIGR01740">
    <property type="entry name" value="pyrF"/>
    <property type="match status" value="1"/>
</dbReference>
<dbReference type="PANTHER" id="PTHR32119">
    <property type="entry name" value="OROTIDINE 5'-PHOSPHATE DECARBOXYLASE"/>
    <property type="match status" value="1"/>
</dbReference>
<dbReference type="PANTHER" id="PTHR32119:SF2">
    <property type="entry name" value="OROTIDINE 5'-PHOSPHATE DECARBOXYLASE"/>
    <property type="match status" value="1"/>
</dbReference>
<dbReference type="Pfam" id="PF00215">
    <property type="entry name" value="OMPdecase"/>
    <property type="match status" value="1"/>
</dbReference>
<dbReference type="SMART" id="SM00934">
    <property type="entry name" value="OMPdecase"/>
    <property type="match status" value="1"/>
</dbReference>
<dbReference type="SUPFAM" id="SSF51366">
    <property type="entry name" value="Ribulose-phoshate binding barrel"/>
    <property type="match status" value="1"/>
</dbReference>
<dbReference type="PROSITE" id="PS00156">
    <property type="entry name" value="OMPDECASE"/>
    <property type="match status" value="1"/>
</dbReference>